<proteinExistence type="inferred from homology"/>
<name>VIAA_ECOBW</name>
<sequence length="483" mass="55907">MLTLDTLNVMLAVSEEGLIEEMIIALLASPQLAVFFEKFPRLKAAITDDVPRWREALRSRLKDARVPPELTEEVMCYQQSQLLSTPQFIVQLPQILDLLHRLNSPWAEQARQLVDANSTITSALHTLFLQRWRLSLIVQATTLNQQLLEEEREQLLSEVQERMTLSGQLEPILADNNTAAGRLWDMSAGQLKRGDYQLIVKYGEFLNEQPELKRLAEQLGRSREAKSIPRNDAQMETFRTMVREPATVPEQVDGLQQSDDILRLLPPELATLGITELEYEFYRRLVEKQLLTYRLHGESWREKVIERPVVHKDYDEQPRGPFIVCVDTSGSMGGFNEQCAKAFCLALMRIALAENRRCYIMLFSTEIVRYELSGPQGIEQAIRFLSQQFRGGTDLASCFRAIMERLQSREWFDADAVVISDFIAQRLPDDVTSKVKELQRVHQHRFHAVAMSAHGKPGIMRIFDHIWRFDTGMRSRLLRRWRR</sequence>
<comment type="function">
    <text evidence="1">Component of the RavA-ViaA chaperone complex, which may act on the membrane to optimize the function of some of the respiratory chains. ViaA stimulates the ATPase activity of RavA.</text>
</comment>
<comment type="subunit">
    <text evidence="1">Homodimer. Interacts with RavA.</text>
</comment>
<comment type="subcellular location">
    <subcellularLocation>
        <location evidence="1">Cytoplasm</location>
    </subcellularLocation>
</comment>
<comment type="similarity">
    <text evidence="1">Belongs to the ViaA family.</text>
</comment>
<dbReference type="EMBL" id="CP001396">
    <property type="protein sequence ID" value="ACR65259.1"/>
    <property type="molecule type" value="Genomic_DNA"/>
</dbReference>
<dbReference type="RefSeq" id="WP_000956642.1">
    <property type="nucleotide sequence ID" value="NC_012759.1"/>
</dbReference>
<dbReference type="SMR" id="C4ZZ23"/>
<dbReference type="GeneID" id="93778222"/>
<dbReference type="KEGG" id="ebw:BWG_3436"/>
<dbReference type="HOGENOM" id="CLU_022130_0_0_6"/>
<dbReference type="GO" id="GO:0005829">
    <property type="term" value="C:cytosol"/>
    <property type="evidence" value="ECO:0007669"/>
    <property type="project" value="TreeGrafter"/>
</dbReference>
<dbReference type="CDD" id="cd01462">
    <property type="entry name" value="VWA_YIEM_type"/>
    <property type="match status" value="1"/>
</dbReference>
<dbReference type="Gene3D" id="3.40.50.410">
    <property type="entry name" value="von Willebrand factor, type A domain"/>
    <property type="match status" value="1"/>
</dbReference>
<dbReference type="HAMAP" id="MF_01626">
    <property type="entry name" value="ViaA"/>
    <property type="match status" value="1"/>
</dbReference>
<dbReference type="InterPro" id="IPR008912">
    <property type="entry name" value="Uncharacterised_CoxE"/>
</dbReference>
<dbReference type="InterPro" id="IPR023481">
    <property type="entry name" value="Uncharacterised_ViaA"/>
</dbReference>
<dbReference type="InterPro" id="IPR002035">
    <property type="entry name" value="VWF_A"/>
</dbReference>
<dbReference type="InterPro" id="IPR036465">
    <property type="entry name" value="vWFA_dom_sf"/>
</dbReference>
<dbReference type="NCBIfam" id="NF008230">
    <property type="entry name" value="PRK10997.1"/>
    <property type="match status" value="1"/>
</dbReference>
<dbReference type="PANTHER" id="PTHR36846">
    <property type="entry name" value="PROTEIN VIAA"/>
    <property type="match status" value="1"/>
</dbReference>
<dbReference type="PANTHER" id="PTHR36846:SF1">
    <property type="entry name" value="PROTEIN VIAA"/>
    <property type="match status" value="1"/>
</dbReference>
<dbReference type="Pfam" id="PF05762">
    <property type="entry name" value="VWA_CoxE"/>
    <property type="match status" value="1"/>
</dbReference>
<dbReference type="SMART" id="SM00327">
    <property type="entry name" value="VWA"/>
    <property type="match status" value="1"/>
</dbReference>
<dbReference type="SUPFAM" id="SSF53300">
    <property type="entry name" value="vWA-like"/>
    <property type="match status" value="1"/>
</dbReference>
<accession>C4ZZ23</accession>
<feature type="chain" id="PRO_1000215745" description="Regulatory protein ViaA">
    <location>
        <begin position="1"/>
        <end position="483"/>
    </location>
</feature>
<keyword id="KW-0143">Chaperone</keyword>
<keyword id="KW-0963">Cytoplasm</keyword>
<gene>
    <name evidence="1" type="primary">viaA</name>
    <name type="ordered locus">BWG_3436</name>
</gene>
<protein>
    <recommendedName>
        <fullName evidence="1">Regulatory protein ViaA</fullName>
    </recommendedName>
    <alternativeName>
        <fullName evidence="1">VWA interacting with AAA+ ATPase</fullName>
    </alternativeName>
</protein>
<reference key="1">
    <citation type="journal article" date="2009" name="J. Bacteriol.">
        <title>Genomic sequencing reveals regulatory mutations and recombinational events in the widely used MC4100 lineage of Escherichia coli K-12.</title>
        <authorList>
            <person name="Ferenci T."/>
            <person name="Zhou Z."/>
            <person name="Betteridge T."/>
            <person name="Ren Y."/>
            <person name="Liu Y."/>
            <person name="Feng L."/>
            <person name="Reeves P.R."/>
            <person name="Wang L."/>
        </authorList>
    </citation>
    <scope>NUCLEOTIDE SEQUENCE [LARGE SCALE GENOMIC DNA]</scope>
    <source>
        <strain>K12 / MC4100 / BW2952</strain>
    </source>
</reference>
<organism>
    <name type="scientific">Escherichia coli (strain K12 / MC4100 / BW2952)</name>
    <dbReference type="NCBI Taxonomy" id="595496"/>
    <lineage>
        <taxon>Bacteria</taxon>
        <taxon>Pseudomonadati</taxon>
        <taxon>Pseudomonadota</taxon>
        <taxon>Gammaproteobacteria</taxon>
        <taxon>Enterobacterales</taxon>
        <taxon>Enterobacteriaceae</taxon>
        <taxon>Escherichia</taxon>
    </lineage>
</organism>
<evidence type="ECO:0000255" key="1">
    <source>
        <dbReference type="HAMAP-Rule" id="MF_01626"/>
    </source>
</evidence>